<dbReference type="EMBL" id="AF139987">
    <property type="protein sequence ID" value="AAD34859.1"/>
    <property type="molecule type" value="Genomic_DNA"/>
</dbReference>
<dbReference type="EMBL" id="AF139987">
    <property type="protein sequence ID" value="AAD34860.1"/>
    <property type="molecule type" value="Genomic_DNA"/>
</dbReference>
<dbReference type="EMBL" id="AF289664">
    <property type="protein sequence ID" value="AAF99330.1"/>
    <property type="molecule type" value="Genomic_DNA"/>
</dbReference>
<dbReference type="EMBL" id="BC014796">
    <property type="protein sequence ID" value="AAH14796.1"/>
    <property type="molecule type" value="mRNA"/>
</dbReference>
<dbReference type="CCDS" id="CCDS19723.1">
    <molecule id="Q9WUK2-1"/>
</dbReference>
<dbReference type="CCDS" id="CCDS84968.1">
    <molecule id="Q9WUK2-2"/>
</dbReference>
<dbReference type="RefSeq" id="NP_001299796.1">
    <molecule id="Q9WUK2-2"/>
    <property type="nucleotide sequence ID" value="NM_001312867.1"/>
</dbReference>
<dbReference type="RefSeq" id="NP_291039.1">
    <molecule id="Q9WUK2-1"/>
    <property type="nucleotide sequence ID" value="NM_033561.2"/>
</dbReference>
<dbReference type="PDB" id="2DNG">
    <property type="method" value="NMR"/>
    <property type="chains" value="A=34-123"/>
</dbReference>
<dbReference type="PDBsum" id="2DNG"/>
<dbReference type="SMR" id="Q9WUK2"/>
<dbReference type="BioGRID" id="204551">
    <property type="interactions" value="13"/>
</dbReference>
<dbReference type="FunCoup" id="Q9WUK2">
    <property type="interactions" value="1564"/>
</dbReference>
<dbReference type="STRING" id="10090.ENSMUSP00000143910"/>
<dbReference type="GlyGen" id="Q9WUK2">
    <property type="glycosylation" value="1 site, 1 O-linked glycan (1 site)"/>
</dbReference>
<dbReference type="iPTMnet" id="Q9WUK2"/>
<dbReference type="PhosphoSitePlus" id="Q9WUK2"/>
<dbReference type="SwissPalm" id="Q9WUK2"/>
<dbReference type="jPOST" id="Q9WUK2"/>
<dbReference type="PaxDb" id="10090-ENSMUSP00000048833"/>
<dbReference type="ProteomicsDB" id="267263">
    <molecule id="Q9WUK2-1"/>
</dbReference>
<dbReference type="ProteomicsDB" id="267264">
    <molecule id="Q9WUK2-2"/>
</dbReference>
<dbReference type="Pumba" id="Q9WUK2"/>
<dbReference type="Antibodypedia" id="14587">
    <property type="antibodies" value="213 antibodies from 29 providers"/>
</dbReference>
<dbReference type="DNASU" id="22384"/>
<dbReference type="Ensembl" id="ENSMUST00000036125.10">
    <molecule id="Q9WUK2-2"/>
    <property type="protein sequence ID" value="ENSMUSP00000048833.10"/>
    <property type="gene ID" value="ENSMUSG00000040731.14"/>
</dbReference>
<dbReference type="Ensembl" id="ENSMUST00000202622.4">
    <molecule id="Q9WUK2-1"/>
    <property type="protein sequence ID" value="ENSMUSP00000143910.2"/>
    <property type="gene ID" value="ENSMUSG00000040731.14"/>
</dbReference>
<dbReference type="GeneID" id="22384"/>
<dbReference type="KEGG" id="mmu:22384"/>
<dbReference type="UCSC" id="uc008zwp.1">
    <molecule id="Q9WUK2-1"/>
    <property type="organism name" value="mouse"/>
</dbReference>
<dbReference type="AGR" id="MGI:1341822"/>
<dbReference type="CTD" id="7458"/>
<dbReference type="MGI" id="MGI:1341822">
    <property type="gene designation" value="Eif4h"/>
</dbReference>
<dbReference type="VEuPathDB" id="HostDB:ENSMUSG00000040731"/>
<dbReference type="eggNOG" id="KOG0118">
    <property type="taxonomic scope" value="Eukaryota"/>
</dbReference>
<dbReference type="GeneTree" id="ENSGT00940000155414"/>
<dbReference type="HOGENOM" id="CLU_046195_1_0_1"/>
<dbReference type="InParanoid" id="Q9WUK2"/>
<dbReference type="OMA" id="GPEDRGM"/>
<dbReference type="OrthoDB" id="48651at2759"/>
<dbReference type="PhylomeDB" id="Q9WUK2"/>
<dbReference type="TreeFam" id="TF313897"/>
<dbReference type="Reactome" id="R-MMU-156827">
    <property type="pathway name" value="L13a-mediated translational silencing of Ceruloplasmin expression"/>
</dbReference>
<dbReference type="Reactome" id="R-MMU-72649">
    <property type="pathway name" value="Translation initiation complex formation"/>
</dbReference>
<dbReference type="Reactome" id="R-MMU-72662">
    <property type="pathway name" value="Activation of the mRNA upon binding of the cap-binding complex and eIFs, and subsequent binding to 43S"/>
</dbReference>
<dbReference type="Reactome" id="R-MMU-72702">
    <property type="pathway name" value="Ribosomal scanning and start codon recognition"/>
</dbReference>
<dbReference type="Reactome" id="R-MMU-72706">
    <property type="pathway name" value="GTP hydrolysis and joining of the 60S ribosomal subunit"/>
</dbReference>
<dbReference type="BioGRID-ORCS" id="22384">
    <property type="hits" value="3 hits in 78 CRISPR screens"/>
</dbReference>
<dbReference type="ChiTaRS" id="Eif4h">
    <property type="organism name" value="mouse"/>
</dbReference>
<dbReference type="EvolutionaryTrace" id="Q9WUK2"/>
<dbReference type="PRO" id="PR:Q9WUK2"/>
<dbReference type="Proteomes" id="UP000000589">
    <property type="component" value="Chromosome 5"/>
</dbReference>
<dbReference type="RNAct" id="Q9WUK2">
    <property type="molecule type" value="protein"/>
</dbReference>
<dbReference type="Bgee" id="ENSMUSG00000040731">
    <property type="expression patterns" value="Expressed in metanephric loop of Henle and 252 other cell types or tissues"/>
</dbReference>
<dbReference type="ExpressionAtlas" id="Q9WUK2">
    <property type="expression patterns" value="baseline and differential"/>
</dbReference>
<dbReference type="GO" id="GO:0048471">
    <property type="term" value="C:perinuclear region of cytoplasm"/>
    <property type="evidence" value="ECO:0007669"/>
    <property type="project" value="UniProtKB-SubCell"/>
</dbReference>
<dbReference type="GO" id="GO:0003723">
    <property type="term" value="F:RNA binding"/>
    <property type="evidence" value="ECO:0007669"/>
    <property type="project" value="UniProtKB-KW"/>
</dbReference>
<dbReference type="GO" id="GO:0003743">
    <property type="term" value="F:translation initiation factor activity"/>
    <property type="evidence" value="ECO:0007669"/>
    <property type="project" value="UniProtKB-KW"/>
</dbReference>
<dbReference type="GO" id="GO:0048589">
    <property type="term" value="P:developmental growth"/>
    <property type="evidence" value="ECO:0000315"/>
    <property type="project" value="MGI"/>
</dbReference>
<dbReference type="GO" id="GO:0019953">
    <property type="term" value="P:sexual reproduction"/>
    <property type="evidence" value="ECO:0000315"/>
    <property type="project" value="MGI"/>
</dbReference>
<dbReference type="CDD" id="cd12401">
    <property type="entry name" value="RRM_eIF4H"/>
    <property type="match status" value="1"/>
</dbReference>
<dbReference type="FunFam" id="3.30.70.330:FF:000115">
    <property type="entry name" value="eukaryotic translation initiation factor 4H"/>
    <property type="match status" value="1"/>
</dbReference>
<dbReference type="Gene3D" id="3.30.70.330">
    <property type="match status" value="1"/>
</dbReference>
<dbReference type="InterPro" id="IPR034229">
    <property type="entry name" value="eIF4H_RRM"/>
</dbReference>
<dbReference type="InterPro" id="IPR012677">
    <property type="entry name" value="Nucleotide-bd_a/b_plait_sf"/>
</dbReference>
<dbReference type="InterPro" id="IPR035979">
    <property type="entry name" value="RBD_domain_sf"/>
</dbReference>
<dbReference type="InterPro" id="IPR000504">
    <property type="entry name" value="RRM_dom"/>
</dbReference>
<dbReference type="PANTHER" id="PTHR23236">
    <property type="entry name" value="EUKARYOTIC TRANSLATION INITIATION FACTOR 4B/4H"/>
    <property type="match status" value="1"/>
</dbReference>
<dbReference type="PANTHER" id="PTHR23236:SF11">
    <property type="entry name" value="EUKARYOTIC TRANSLATION INITIATION FACTOR 4H"/>
    <property type="match status" value="1"/>
</dbReference>
<dbReference type="Pfam" id="PF00076">
    <property type="entry name" value="RRM_1"/>
    <property type="match status" value="1"/>
</dbReference>
<dbReference type="SMART" id="SM00360">
    <property type="entry name" value="RRM"/>
    <property type="match status" value="1"/>
</dbReference>
<dbReference type="SUPFAM" id="SSF54928">
    <property type="entry name" value="RNA-binding domain, RBD"/>
    <property type="match status" value="1"/>
</dbReference>
<dbReference type="PROSITE" id="PS50102">
    <property type="entry name" value="RRM"/>
    <property type="match status" value="1"/>
</dbReference>
<accession>Q9WUK2</accession>
<accession>Q9WUK3</accession>
<proteinExistence type="evidence at protein level"/>
<name>IF4H_MOUSE</name>
<sequence>MADFDTYDDRAYSSFGGGRGSRGSAGGHGSRSQKELPTEPPYTAYVGNLPFNTVQGDIDAIFKDLSIRSVRLVRDKDTDKFKGFCYVEFDEVDSLKEALTYDGALLGDRSLRVDIAEGRKQDKGGFGFRKGGPDDRGMGGSRESRGGWDSRDDFNSGYRDDFLGGRGGSRPGDRRAGPPMGSRFRDGPPLRGSNMDFREPTEEERAQRPRLQLKPRTVATPLNQVANPNSAIFGGARPREEVVQKEQE</sequence>
<comment type="function">
    <text evidence="1">Stimulates the RNA helicase activity of EIF4A in the translation initiation complex. Binds weakly mRNA (By similarity).</text>
</comment>
<comment type="subcellular location">
    <subcellularLocation>
        <location>Cytoplasm</location>
        <location>Perinuclear region</location>
    </subcellularLocation>
</comment>
<comment type="alternative products">
    <event type="alternative splicing"/>
    <isoform>
        <id>Q9WUK2-1</id>
        <name>Long</name>
        <sequence type="displayed"/>
    </isoform>
    <isoform>
        <id>Q9WUK2-2</id>
        <name>Short</name>
        <sequence type="described" ref="VSP_005800"/>
    </isoform>
</comment>
<comment type="tissue specificity">
    <text evidence="5">Expressed at high levels in heart, liver and testis and at lower levels in brain, spleen, lung, skeletal muscle, kidney and embryonic tissues. Both isoforms are expressed at similar levels.</text>
</comment>
<reference key="1">
    <citation type="journal article" date="2000" name="Mamm. Genome">
        <title>Comparative genomic sequence analysis of the Williams syndrome region (LIMK1-RFC2) of human chromosome 7q11.23.</title>
        <authorList>
            <person name="Martindale D.W."/>
            <person name="Wilson M.D."/>
            <person name="Wang D."/>
            <person name="Burke R.D."/>
            <person name="Chen X."/>
            <person name="Duronio V."/>
            <person name="Koop B.F."/>
        </authorList>
    </citation>
    <scope>NUCLEOTIDE SEQUENCE [GENOMIC DNA]</scope>
    <scope>ALTERNATIVE SPLICING</scope>
    <scope>TISSUE SPECIFICITY</scope>
    <source>
        <strain>129/SvJ</strain>
    </source>
</reference>
<reference key="2">
    <citation type="submission" date="2000-07" db="EMBL/GenBank/DDBJ databases">
        <authorList>
            <person name="Green E.D."/>
        </authorList>
    </citation>
    <scope>NUCLEOTIDE SEQUENCE [GENOMIC DNA] (ISOFORM LONG)</scope>
    <source>
        <strain>129/Sv</strain>
    </source>
</reference>
<reference key="3">
    <citation type="journal article" date="2004" name="Genome Res.">
        <title>The status, quality, and expansion of the NIH full-length cDNA project: the Mammalian Gene Collection (MGC).</title>
        <authorList>
            <consortium name="The MGC Project Team"/>
        </authorList>
    </citation>
    <scope>NUCLEOTIDE SEQUENCE [LARGE SCALE MRNA] (ISOFORM SHORT)</scope>
    <source>
        <strain>FVB/N</strain>
        <tissue>Mammary gland</tissue>
    </source>
</reference>
<reference key="4">
    <citation type="submission" date="2009-01" db="UniProtKB">
        <authorList>
            <person name="Lubec G."/>
            <person name="Sunyer B."/>
            <person name="Chen W.-Q."/>
        </authorList>
    </citation>
    <scope>PROTEIN SEQUENCE OF 97-109</scope>
    <scope>IDENTIFICATION BY MASS SPECTROMETRY</scope>
    <source>
        <strain>OF1</strain>
        <tissue>Hippocampus</tissue>
    </source>
</reference>
<reference key="5">
    <citation type="journal article" date="2005" name="Nat. Biotechnol.">
        <title>Immunoaffinity profiling of tyrosine phosphorylation in cancer cells.</title>
        <authorList>
            <person name="Rush J."/>
            <person name="Moritz A."/>
            <person name="Lee K.A."/>
            <person name="Guo A."/>
            <person name="Goss V.L."/>
            <person name="Spek E.J."/>
            <person name="Zhang H."/>
            <person name="Zha X.-M."/>
            <person name="Polakiewicz R.D."/>
            <person name="Comb M.J."/>
        </authorList>
    </citation>
    <scope>IDENTIFICATION BY MASS SPECTROMETRY [LARGE SCALE ANALYSIS]</scope>
</reference>
<reference key="6">
    <citation type="journal article" date="2010" name="Cell">
        <title>A tissue-specific atlas of mouse protein phosphorylation and expression.</title>
        <authorList>
            <person name="Huttlin E.L."/>
            <person name="Jedrychowski M.P."/>
            <person name="Elias J.E."/>
            <person name="Goswami T."/>
            <person name="Rad R."/>
            <person name="Beausoleil S.A."/>
            <person name="Villen J."/>
            <person name="Haas W."/>
            <person name="Sowa M.E."/>
            <person name="Gygi S.P."/>
        </authorList>
    </citation>
    <scope>IDENTIFICATION BY MASS SPECTROMETRY [LARGE SCALE ANALYSIS]</scope>
    <source>
        <tissue>Brain</tissue>
        <tissue>Brown adipose tissue</tissue>
        <tissue>Heart</tissue>
        <tissue>Kidney</tissue>
        <tissue>Liver</tissue>
        <tissue>Lung</tissue>
        <tissue>Pancreas</tissue>
        <tissue>Spleen</tissue>
        <tissue>Testis</tissue>
    </source>
</reference>
<reference key="7">
    <citation type="journal article" date="2014" name="Mol. Cell. Proteomics">
        <title>Immunoaffinity enrichment and mass spectrometry analysis of protein methylation.</title>
        <authorList>
            <person name="Guo A."/>
            <person name="Gu H."/>
            <person name="Zhou J."/>
            <person name="Mulhern D."/>
            <person name="Wang Y."/>
            <person name="Lee K.A."/>
            <person name="Yang V."/>
            <person name="Aguiar M."/>
            <person name="Kornhauser J."/>
            <person name="Jia X."/>
            <person name="Ren J."/>
            <person name="Beausoleil S.A."/>
            <person name="Silva J.C."/>
            <person name="Vemulapalli V."/>
            <person name="Bedford M.T."/>
            <person name="Comb M.J."/>
        </authorList>
    </citation>
    <scope>METHYLATION [LARGE SCALE ANALYSIS] AT ARG-19; ARG-22; ARG-136; ARG-166 AND ARG-175</scope>
    <scope>IDENTIFICATION BY MASS SPECTROMETRY [LARGE SCALE ANALYSIS]</scope>
    <source>
        <tissue>Brain</tissue>
        <tissue>Embryo</tissue>
    </source>
</reference>
<reference key="8">
    <citation type="submission" date="2006-10" db="PDB data bank">
        <title>Solution structure of RNA binding domain in eukaryotic translation initiation factor 4H.</title>
        <authorList>
            <consortium name="RIKEN structural genomics initiative (RSGI)"/>
        </authorList>
    </citation>
    <scope>STRUCTURE BY NMR OF 32-125</scope>
</reference>
<protein>
    <recommendedName>
        <fullName>Eukaryotic translation initiation factor 4H</fullName>
        <shortName>eIF-4H</shortName>
    </recommendedName>
    <alternativeName>
        <fullName>Williams-Beuren syndrome chromosomal region 1 protein homolog</fullName>
    </alternativeName>
</protein>
<feature type="initiator methionine" description="Removed" evidence="2">
    <location>
        <position position="1"/>
    </location>
</feature>
<feature type="chain" id="PRO_0000081620" description="Eukaryotic translation initiation factor 4H">
    <location>
        <begin position="2"/>
        <end position="248"/>
    </location>
</feature>
<feature type="domain" description="RRM" evidence="3">
    <location>
        <begin position="42"/>
        <end position="118"/>
    </location>
</feature>
<feature type="region of interest" description="Disordered" evidence="4">
    <location>
        <begin position="1"/>
        <end position="41"/>
    </location>
</feature>
<feature type="region of interest" description="Disordered" evidence="4">
    <location>
        <begin position="122"/>
        <end position="248"/>
    </location>
</feature>
<feature type="compositionally biased region" description="Gly residues" evidence="4">
    <location>
        <begin position="15"/>
        <end position="29"/>
    </location>
</feature>
<feature type="compositionally biased region" description="Basic and acidic residues" evidence="4">
    <location>
        <begin position="131"/>
        <end position="163"/>
    </location>
</feature>
<feature type="compositionally biased region" description="Basic and acidic residues" evidence="4">
    <location>
        <begin position="196"/>
        <end position="207"/>
    </location>
</feature>
<feature type="compositionally biased region" description="Polar residues" evidence="4">
    <location>
        <begin position="220"/>
        <end position="230"/>
    </location>
</feature>
<feature type="compositionally biased region" description="Basic and acidic residues" evidence="4">
    <location>
        <begin position="237"/>
        <end position="248"/>
    </location>
</feature>
<feature type="modified residue" description="N-acetylalanine" evidence="2">
    <location>
        <position position="2"/>
    </location>
</feature>
<feature type="modified residue" description="Phosphoserine" evidence="2">
    <location>
        <position position="13"/>
    </location>
</feature>
<feature type="modified residue" description="Phosphoserine" evidence="2">
    <location>
        <position position="14"/>
    </location>
</feature>
<feature type="modified residue" description="Omega-N-methylarginine" evidence="7">
    <location>
        <position position="19"/>
    </location>
</feature>
<feature type="modified residue" description="Phosphoserine" evidence="2">
    <location>
        <position position="21"/>
    </location>
</feature>
<feature type="modified residue" description="Omega-N-methylarginine" evidence="7">
    <location>
        <position position="22"/>
    </location>
</feature>
<feature type="modified residue" description="Phosphoserine" evidence="2">
    <location>
        <position position="24"/>
    </location>
</feature>
<feature type="modified residue" description="Phosphoserine" evidence="2">
    <location>
        <position position="32"/>
    </location>
</feature>
<feature type="modified residue" description="Omega-N-methylarginine" evidence="7">
    <location>
        <position position="136"/>
    </location>
</feature>
<feature type="modified residue" description="Omega-N-methylarginine" evidence="7">
    <location>
        <position position="166"/>
    </location>
</feature>
<feature type="modified residue" description="Omega-N-methylarginine" evidence="7">
    <location>
        <position position="175"/>
    </location>
</feature>
<feature type="modified residue" description="Phosphoserine" evidence="2">
    <location>
        <position position="230"/>
    </location>
</feature>
<feature type="splice variant" id="VSP_005800" description="In isoform Short." evidence="6">
    <location>
        <begin position="137"/>
        <end position="156"/>
    </location>
</feature>
<feature type="strand" evidence="8">
    <location>
        <begin position="38"/>
        <end position="40"/>
    </location>
</feature>
<feature type="strand" evidence="8">
    <location>
        <begin position="42"/>
        <end position="48"/>
    </location>
</feature>
<feature type="helix" evidence="8">
    <location>
        <begin position="55"/>
        <end position="61"/>
    </location>
</feature>
<feature type="turn" evidence="8">
    <location>
        <begin position="62"/>
        <end position="64"/>
    </location>
</feature>
<feature type="strand" evidence="8">
    <location>
        <begin position="67"/>
        <end position="74"/>
    </location>
</feature>
<feature type="strand" evidence="8">
    <location>
        <begin position="76"/>
        <end position="78"/>
    </location>
</feature>
<feature type="strand" evidence="8">
    <location>
        <begin position="80"/>
        <end position="91"/>
    </location>
</feature>
<feature type="helix" evidence="8">
    <location>
        <begin position="92"/>
        <end position="98"/>
    </location>
</feature>
<feature type="helix" evidence="8">
    <location>
        <begin position="99"/>
        <end position="101"/>
    </location>
</feature>
<feature type="strand" evidence="8">
    <location>
        <begin position="112"/>
        <end position="115"/>
    </location>
</feature>
<evidence type="ECO:0000250" key="1"/>
<evidence type="ECO:0000250" key="2">
    <source>
        <dbReference type="UniProtKB" id="Q15056"/>
    </source>
</evidence>
<evidence type="ECO:0000255" key="3">
    <source>
        <dbReference type="PROSITE-ProRule" id="PRU00176"/>
    </source>
</evidence>
<evidence type="ECO:0000256" key="4">
    <source>
        <dbReference type="SAM" id="MobiDB-lite"/>
    </source>
</evidence>
<evidence type="ECO:0000269" key="5">
    <source>
    </source>
</evidence>
<evidence type="ECO:0000303" key="6">
    <source>
    </source>
</evidence>
<evidence type="ECO:0007744" key="7">
    <source>
    </source>
</evidence>
<evidence type="ECO:0007829" key="8">
    <source>
        <dbReference type="PDB" id="2DNG"/>
    </source>
</evidence>
<organism>
    <name type="scientific">Mus musculus</name>
    <name type="common">Mouse</name>
    <dbReference type="NCBI Taxonomy" id="10090"/>
    <lineage>
        <taxon>Eukaryota</taxon>
        <taxon>Metazoa</taxon>
        <taxon>Chordata</taxon>
        <taxon>Craniata</taxon>
        <taxon>Vertebrata</taxon>
        <taxon>Euteleostomi</taxon>
        <taxon>Mammalia</taxon>
        <taxon>Eutheria</taxon>
        <taxon>Euarchontoglires</taxon>
        <taxon>Glires</taxon>
        <taxon>Rodentia</taxon>
        <taxon>Myomorpha</taxon>
        <taxon>Muroidea</taxon>
        <taxon>Muridae</taxon>
        <taxon>Murinae</taxon>
        <taxon>Mus</taxon>
        <taxon>Mus</taxon>
    </lineage>
</organism>
<keyword id="KW-0002">3D-structure</keyword>
<keyword id="KW-0007">Acetylation</keyword>
<keyword id="KW-0025">Alternative splicing</keyword>
<keyword id="KW-0963">Cytoplasm</keyword>
<keyword id="KW-0903">Direct protein sequencing</keyword>
<keyword id="KW-0396">Initiation factor</keyword>
<keyword id="KW-0488">Methylation</keyword>
<keyword id="KW-0597">Phosphoprotein</keyword>
<keyword id="KW-0648">Protein biosynthesis</keyword>
<keyword id="KW-1185">Reference proteome</keyword>
<keyword id="KW-0694">RNA-binding</keyword>
<gene>
    <name type="primary">Eif4h</name>
    <name type="synonym">Wbscr1</name>
</gene>